<name>RUVA_WOLTR</name>
<comment type="function">
    <text evidence="1">The RuvA-RuvB-RuvC complex processes Holliday junction (HJ) DNA during genetic recombination and DNA repair, while the RuvA-RuvB complex plays an important role in the rescue of blocked DNA replication forks via replication fork reversal (RFR). RuvA specifically binds to HJ cruciform DNA, conferring on it an open structure. The RuvB hexamer acts as an ATP-dependent pump, pulling dsDNA into and through the RuvAB complex. HJ branch migration allows RuvC to scan DNA until it finds its consensus sequence, where it cleaves and resolves the cruciform DNA.</text>
</comment>
<comment type="subunit">
    <text evidence="1">Homotetramer. Forms an RuvA(8)-RuvB(12)-Holliday junction (HJ) complex. HJ DNA is sandwiched between 2 RuvA tetramers; dsDNA enters through RuvA and exits via RuvB. An RuvB hexamer assembles on each DNA strand where it exits the tetramer. Each RuvB hexamer is contacted by two RuvA subunits (via domain III) on 2 adjacent RuvB subunits; this complex drives branch migration. In the full resolvosome a probable DNA-RuvA(4)-RuvB(12)-RuvC(2) complex forms which resolves the HJ.</text>
</comment>
<comment type="subcellular location">
    <subcellularLocation>
        <location evidence="1">Cytoplasm</location>
    </subcellularLocation>
</comment>
<comment type="domain">
    <text evidence="1">Has three domains with a flexible linker between the domains II and III and assumes an 'L' shape. Domain III is highly mobile and contacts RuvB.</text>
</comment>
<comment type="similarity">
    <text evidence="1">Belongs to the RuvA family.</text>
</comment>
<protein>
    <recommendedName>
        <fullName evidence="1">Holliday junction branch migration complex subunit RuvA</fullName>
    </recommendedName>
</protein>
<dbReference type="EMBL" id="AE017321">
    <property type="protein sequence ID" value="AAW70840.1"/>
    <property type="molecule type" value="Genomic_DNA"/>
</dbReference>
<dbReference type="RefSeq" id="WP_011256450.1">
    <property type="nucleotide sequence ID" value="NC_006833.1"/>
</dbReference>
<dbReference type="SMR" id="Q5GT34"/>
<dbReference type="STRING" id="292805.Wbm0251"/>
<dbReference type="KEGG" id="wbm:Wbm0251"/>
<dbReference type="eggNOG" id="COG0632">
    <property type="taxonomic scope" value="Bacteria"/>
</dbReference>
<dbReference type="HOGENOM" id="CLU_087936_3_0_5"/>
<dbReference type="Proteomes" id="UP000000534">
    <property type="component" value="Chromosome"/>
</dbReference>
<dbReference type="GO" id="GO:0005737">
    <property type="term" value="C:cytoplasm"/>
    <property type="evidence" value="ECO:0007669"/>
    <property type="project" value="UniProtKB-SubCell"/>
</dbReference>
<dbReference type="GO" id="GO:0009379">
    <property type="term" value="C:Holliday junction helicase complex"/>
    <property type="evidence" value="ECO:0007669"/>
    <property type="project" value="InterPro"/>
</dbReference>
<dbReference type="GO" id="GO:0048476">
    <property type="term" value="C:Holliday junction resolvase complex"/>
    <property type="evidence" value="ECO:0007669"/>
    <property type="project" value="UniProtKB-UniRule"/>
</dbReference>
<dbReference type="GO" id="GO:0005524">
    <property type="term" value="F:ATP binding"/>
    <property type="evidence" value="ECO:0007669"/>
    <property type="project" value="InterPro"/>
</dbReference>
<dbReference type="GO" id="GO:0000400">
    <property type="term" value="F:four-way junction DNA binding"/>
    <property type="evidence" value="ECO:0007669"/>
    <property type="project" value="UniProtKB-UniRule"/>
</dbReference>
<dbReference type="GO" id="GO:0009378">
    <property type="term" value="F:four-way junction helicase activity"/>
    <property type="evidence" value="ECO:0007669"/>
    <property type="project" value="InterPro"/>
</dbReference>
<dbReference type="GO" id="GO:0006310">
    <property type="term" value="P:DNA recombination"/>
    <property type="evidence" value="ECO:0007669"/>
    <property type="project" value="UniProtKB-UniRule"/>
</dbReference>
<dbReference type="GO" id="GO:0006281">
    <property type="term" value="P:DNA repair"/>
    <property type="evidence" value="ECO:0007669"/>
    <property type="project" value="UniProtKB-UniRule"/>
</dbReference>
<dbReference type="CDD" id="cd14332">
    <property type="entry name" value="UBA_RuvA_C"/>
    <property type="match status" value="1"/>
</dbReference>
<dbReference type="Gene3D" id="1.10.150.20">
    <property type="entry name" value="5' to 3' exonuclease, C-terminal subdomain"/>
    <property type="match status" value="1"/>
</dbReference>
<dbReference type="Gene3D" id="1.10.8.10">
    <property type="entry name" value="DNA helicase RuvA subunit, C-terminal domain"/>
    <property type="match status" value="1"/>
</dbReference>
<dbReference type="Gene3D" id="2.40.50.140">
    <property type="entry name" value="Nucleic acid-binding proteins"/>
    <property type="match status" value="1"/>
</dbReference>
<dbReference type="HAMAP" id="MF_00031">
    <property type="entry name" value="DNA_HJ_migration_RuvA"/>
    <property type="match status" value="1"/>
</dbReference>
<dbReference type="InterPro" id="IPR013849">
    <property type="entry name" value="DNA_helicase_Holl-junc_RuvA_I"/>
</dbReference>
<dbReference type="InterPro" id="IPR012340">
    <property type="entry name" value="NA-bd_OB-fold"/>
</dbReference>
<dbReference type="InterPro" id="IPR000085">
    <property type="entry name" value="RuvA"/>
</dbReference>
<dbReference type="InterPro" id="IPR010994">
    <property type="entry name" value="RuvA_2-like"/>
</dbReference>
<dbReference type="InterPro" id="IPR011114">
    <property type="entry name" value="RuvA_C"/>
</dbReference>
<dbReference type="InterPro" id="IPR036267">
    <property type="entry name" value="RuvA_C_sf"/>
</dbReference>
<dbReference type="NCBIfam" id="NF011194">
    <property type="entry name" value="PRK14600.1"/>
    <property type="match status" value="1"/>
</dbReference>
<dbReference type="NCBIfam" id="TIGR00084">
    <property type="entry name" value="ruvA"/>
    <property type="match status" value="1"/>
</dbReference>
<dbReference type="Pfam" id="PF14520">
    <property type="entry name" value="HHH_5"/>
    <property type="match status" value="1"/>
</dbReference>
<dbReference type="Pfam" id="PF07499">
    <property type="entry name" value="RuvA_C"/>
    <property type="match status" value="1"/>
</dbReference>
<dbReference type="Pfam" id="PF01330">
    <property type="entry name" value="RuvA_N"/>
    <property type="match status" value="1"/>
</dbReference>
<dbReference type="SUPFAM" id="SSF46929">
    <property type="entry name" value="DNA helicase RuvA subunit, C-terminal domain"/>
    <property type="match status" value="1"/>
</dbReference>
<dbReference type="SUPFAM" id="SSF50249">
    <property type="entry name" value="Nucleic acid-binding proteins"/>
    <property type="match status" value="1"/>
</dbReference>
<dbReference type="SUPFAM" id="SSF47781">
    <property type="entry name" value="RuvA domain 2-like"/>
    <property type="match status" value="1"/>
</dbReference>
<feature type="chain" id="PRO_1000195187" description="Holliday junction branch migration complex subunit RuvA">
    <location>
        <begin position="1"/>
        <end position="196"/>
    </location>
</feature>
<feature type="region of interest" description="Domain I" evidence="1">
    <location>
        <begin position="1"/>
        <end position="65"/>
    </location>
</feature>
<feature type="region of interest" description="Domain II" evidence="1">
    <location>
        <begin position="66"/>
        <end position="143"/>
    </location>
</feature>
<feature type="region of interest" description="Flexible linker" evidence="1">
    <location>
        <begin position="144"/>
        <end position="147"/>
    </location>
</feature>
<feature type="region of interest" description="Domain III" evidence="1">
    <location>
        <begin position="147"/>
        <end position="196"/>
    </location>
</feature>
<reference key="1">
    <citation type="journal article" date="2005" name="PLoS Biol.">
        <title>The Wolbachia genome of Brugia malayi: endosymbiont evolution within a human pathogenic nematode.</title>
        <authorList>
            <person name="Foster J."/>
            <person name="Ganatra M."/>
            <person name="Kamal I."/>
            <person name="Ware J."/>
            <person name="Makarova K."/>
            <person name="Ivanova N."/>
            <person name="Bhattacharyya A."/>
            <person name="Kapatral V."/>
            <person name="Kumar S."/>
            <person name="Posfai J."/>
            <person name="Vincze T."/>
            <person name="Ingram J."/>
            <person name="Moran L."/>
            <person name="Lapidus A."/>
            <person name="Omelchenko M."/>
            <person name="Kyrpides N."/>
            <person name="Ghedin E."/>
            <person name="Wang S."/>
            <person name="Goltsman E."/>
            <person name="Joukov V."/>
            <person name="Ostrovskaya O."/>
            <person name="Tsukerman K."/>
            <person name="Mazur M."/>
            <person name="Comb D."/>
            <person name="Koonin E."/>
            <person name="Slatko B."/>
        </authorList>
    </citation>
    <scope>NUCLEOTIDE SEQUENCE [LARGE SCALE GENOMIC DNA]</scope>
    <source>
        <strain>TRS</strain>
    </source>
</reference>
<organism>
    <name type="scientific">Wolbachia sp. subsp. Brugia malayi (strain TRS)</name>
    <dbReference type="NCBI Taxonomy" id="292805"/>
    <lineage>
        <taxon>Bacteria</taxon>
        <taxon>Pseudomonadati</taxon>
        <taxon>Pseudomonadota</taxon>
        <taxon>Alphaproteobacteria</taxon>
        <taxon>Rickettsiales</taxon>
        <taxon>Anaplasmataceae</taxon>
        <taxon>Wolbachieae</taxon>
        <taxon>Wolbachia</taxon>
    </lineage>
</organism>
<proteinExistence type="inferred from homology"/>
<sequence length="196" mass="21977">MIGNLSGTVDEVYGDHIILNVNDVGYIIYLSAKALNVCYIGSKIKLLIETCANNRENTTQLYGFINKEEQSCLRLLVKVSGVSYKTAMSILSKLTPEQLFLAIMNEDKIALKISGLGPKLINRIITELSGKVSKLETNNNNFYPINEDAVSALINLGYEKTKVYDTIKKYKPNLDTKDIIRTALKELSNYEIDIMQ</sequence>
<keyword id="KW-0963">Cytoplasm</keyword>
<keyword id="KW-0227">DNA damage</keyword>
<keyword id="KW-0233">DNA recombination</keyword>
<keyword id="KW-0234">DNA repair</keyword>
<keyword id="KW-0238">DNA-binding</keyword>
<keyword id="KW-1185">Reference proteome</keyword>
<accession>Q5GT34</accession>
<gene>
    <name evidence="1" type="primary">ruvA</name>
    <name type="ordered locus">Wbm0251</name>
</gene>
<evidence type="ECO:0000255" key="1">
    <source>
        <dbReference type="HAMAP-Rule" id="MF_00031"/>
    </source>
</evidence>